<keyword id="KW-0002">3D-structure</keyword>
<keyword id="KW-0027">Amidation</keyword>
<keyword id="KW-0165">Cleavage on pair of basic residues</keyword>
<keyword id="KW-1015">Disulfide bond</keyword>
<keyword id="KW-0372">Hormone</keyword>
<keyword id="KW-0527">Neuropeptide</keyword>
<keyword id="KW-1185">Reference proteome</keyword>
<keyword id="KW-0964">Secreted</keyword>
<keyword id="KW-0732">Signal</keyword>
<sequence length="155" mass="18044">MRTSMRISLRLLALLACAICSQASLERENNEGTNMANHKLSGVIQWKYEKRPFCNAFTGCGRKRTYPSYPPFSLFKRNEVEEKPYNNEYLSEGLSDLIDINAEPAVENVQKQIMSQAKIFEAIKEASKEIFRQKNKQKMLQNEKEMQQLEERESK</sequence>
<evidence type="ECO:0000250" key="1"/>
<evidence type="ECO:0000250" key="2">
    <source>
        <dbReference type="UniProtKB" id="Q8WRC7"/>
    </source>
</evidence>
<evidence type="ECO:0000255" key="3"/>
<evidence type="ECO:0000256" key="4">
    <source>
        <dbReference type="SAM" id="MobiDB-lite"/>
    </source>
</evidence>
<evidence type="ECO:0000269" key="5">
    <source>
    </source>
</evidence>
<evidence type="ECO:0000269" key="6">
    <source>
    </source>
</evidence>
<evidence type="ECO:0000312" key="7">
    <source>
        <dbReference type="EMBL" id="AAF56045.2"/>
    </source>
</evidence>
<evidence type="ECO:0007829" key="8">
    <source>
        <dbReference type="PDB" id="1Y49"/>
    </source>
</evidence>
<name>CCAP_DROME</name>
<proteinExistence type="evidence at protein level"/>
<gene>
    <name evidence="7" type="primary">CCAP</name>
    <name type="ORF">CG4910</name>
</gene>
<protein>
    <recommendedName>
        <fullName>Cardioactive peptide</fullName>
    </recommendedName>
    <alternativeName>
        <fullName>Cardioacceleratory peptide 2a</fullName>
    </alternativeName>
    <alternativeName>
        <fullName>Crustacean cardioactive peptide</fullName>
        <shortName>CCAP</shortName>
    </alternativeName>
</protein>
<reference evidence="7" key="1">
    <citation type="journal article" date="2000" name="Science">
        <title>The genome sequence of Drosophila melanogaster.</title>
        <authorList>
            <person name="Adams M.D."/>
            <person name="Celniker S.E."/>
            <person name="Holt R.A."/>
            <person name="Evans C.A."/>
            <person name="Gocayne J.D."/>
            <person name="Amanatides P.G."/>
            <person name="Scherer S.E."/>
            <person name="Li P.W."/>
            <person name="Hoskins R.A."/>
            <person name="Galle R.F."/>
            <person name="George R.A."/>
            <person name="Lewis S.E."/>
            <person name="Richards S."/>
            <person name="Ashburner M."/>
            <person name="Henderson S.N."/>
            <person name="Sutton G.G."/>
            <person name="Wortman J.R."/>
            <person name="Yandell M.D."/>
            <person name="Zhang Q."/>
            <person name="Chen L.X."/>
            <person name="Brandon R.C."/>
            <person name="Rogers Y.-H.C."/>
            <person name="Blazej R.G."/>
            <person name="Champe M."/>
            <person name="Pfeiffer B.D."/>
            <person name="Wan K.H."/>
            <person name="Doyle C."/>
            <person name="Baxter E.G."/>
            <person name="Helt G."/>
            <person name="Nelson C.R."/>
            <person name="Miklos G.L.G."/>
            <person name="Abril J.F."/>
            <person name="Agbayani A."/>
            <person name="An H.-J."/>
            <person name="Andrews-Pfannkoch C."/>
            <person name="Baldwin D."/>
            <person name="Ballew R.M."/>
            <person name="Basu A."/>
            <person name="Baxendale J."/>
            <person name="Bayraktaroglu L."/>
            <person name="Beasley E.M."/>
            <person name="Beeson K.Y."/>
            <person name="Benos P.V."/>
            <person name="Berman B.P."/>
            <person name="Bhandari D."/>
            <person name="Bolshakov S."/>
            <person name="Borkova D."/>
            <person name="Botchan M.R."/>
            <person name="Bouck J."/>
            <person name="Brokstein P."/>
            <person name="Brottier P."/>
            <person name="Burtis K.C."/>
            <person name="Busam D.A."/>
            <person name="Butler H."/>
            <person name="Cadieu E."/>
            <person name="Center A."/>
            <person name="Chandra I."/>
            <person name="Cherry J.M."/>
            <person name="Cawley S."/>
            <person name="Dahlke C."/>
            <person name="Davenport L.B."/>
            <person name="Davies P."/>
            <person name="de Pablos B."/>
            <person name="Delcher A."/>
            <person name="Deng Z."/>
            <person name="Mays A.D."/>
            <person name="Dew I."/>
            <person name="Dietz S.M."/>
            <person name="Dodson K."/>
            <person name="Doup L.E."/>
            <person name="Downes M."/>
            <person name="Dugan-Rocha S."/>
            <person name="Dunkov B.C."/>
            <person name="Dunn P."/>
            <person name="Durbin K.J."/>
            <person name="Evangelista C.C."/>
            <person name="Ferraz C."/>
            <person name="Ferriera S."/>
            <person name="Fleischmann W."/>
            <person name="Fosler C."/>
            <person name="Gabrielian A.E."/>
            <person name="Garg N.S."/>
            <person name="Gelbart W.M."/>
            <person name="Glasser K."/>
            <person name="Glodek A."/>
            <person name="Gong F."/>
            <person name="Gorrell J.H."/>
            <person name="Gu Z."/>
            <person name="Guan P."/>
            <person name="Harris M."/>
            <person name="Harris N.L."/>
            <person name="Harvey D.A."/>
            <person name="Heiman T.J."/>
            <person name="Hernandez J.R."/>
            <person name="Houck J."/>
            <person name="Hostin D."/>
            <person name="Houston K.A."/>
            <person name="Howland T.J."/>
            <person name="Wei M.-H."/>
            <person name="Ibegwam C."/>
            <person name="Jalali M."/>
            <person name="Kalush F."/>
            <person name="Karpen G.H."/>
            <person name="Ke Z."/>
            <person name="Kennison J.A."/>
            <person name="Ketchum K.A."/>
            <person name="Kimmel B.E."/>
            <person name="Kodira C.D."/>
            <person name="Kraft C.L."/>
            <person name="Kravitz S."/>
            <person name="Kulp D."/>
            <person name="Lai Z."/>
            <person name="Lasko P."/>
            <person name="Lei Y."/>
            <person name="Levitsky A.A."/>
            <person name="Li J.H."/>
            <person name="Li Z."/>
            <person name="Liang Y."/>
            <person name="Lin X."/>
            <person name="Liu X."/>
            <person name="Mattei B."/>
            <person name="McIntosh T.C."/>
            <person name="McLeod M.P."/>
            <person name="McPherson D."/>
            <person name="Merkulov G."/>
            <person name="Milshina N.V."/>
            <person name="Mobarry C."/>
            <person name="Morris J."/>
            <person name="Moshrefi A."/>
            <person name="Mount S.M."/>
            <person name="Moy M."/>
            <person name="Murphy B."/>
            <person name="Murphy L."/>
            <person name="Muzny D.M."/>
            <person name="Nelson D.L."/>
            <person name="Nelson D.R."/>
            <person name="Nelson K.A."/>
            <person name="Nixon K."/>
            <person name="Nusskern D.R."/>
            <person name="Pacleb J.M."/>
            <person name="Palazzolo M."/>
            <person name="Pittman G.S."/>
            <person name="Pan S."/>
            <person name="Pollard J."/>
            <person name="Puri V."/>
            <person name="Reese M.G."/>
            <person name="Reinert K."/>
            <person name="Remington K."/>
            <person name="Saunders R.D.C."/>
            <person name="Scheeler F."/>
            <person name="Shen H."/>
            <person name="Shue B.C."/>
            <person name="Siden-Kiamos I."/>
            <person name="Simpson M."/>
            <person name="Skupski M.P."/>
            <person name="Smith T.J."/>
            <person name="Spier E."/>
            <person name="Spradling A.C."/>
            <person name="Stapleton M."/>
            <person name="Strong R."/>
            <person name="Sun E."/>
            <person name="Svirskas R."/>
            <person name="Tector C."/>
            <person name="Turner R."/>
            <person name="Venter E."/>
            <person name="Wang A.H."/>
            <person name="Wang X."/>
            <person name="Wang Z.-Y."/>
            <person name="Wassarman D.A."/>
            <person name="Weinstock G.M."/>
            <person name="Weissenbach J."/>
            <person name="Williams S.M."/>
            <person name="Woodage T."/>
            <person name="Worley K.C."/>
            <person name="Wu D."/>
            <person name="Yang S."/>
            <person name="Yao Q.A."/>
            <person name="Ye J."/>
            <person name="Yeh R.-F."/>
            <person name="Zaveri J.S."/>
            <person name="Zhan M."/>
            <person name="Zhang G."/>
            <person name="Zhao Q."/>
            <person name="Zheng L."/>
            <person name="Zheng X.H."/>
            <person name="Zhong F.N."/>
            <person name="Zhong W."/>
            <person name="Zhou X."/>
            <person name="Zhu S.C."/>
            <person name="Zhu X."/>
            <person name="Smith H.O."/>
            <person name="Gibbs R.A."/>
            <person name="Myers E.W."/>
            <person name="Rubin G.M."/>
            <person name="Venter J.C."/>
        </authorList>
    </citation>
    <scope>NUCLEOTIDE SEQUENCE [LARGE SCALE GENOMIC DNA]</scope>
    <source>
        <strain evidence="5">Berkeley</strain>
    </source>
</reference>
<reference key="2">
    <citation type="journal article" date="2002" name="Genome Biol.">
        <title>Annotation of the Drosophila melanogaster euchromatic genome: a systematic review.</title>
        <authorList>
            <person name="Misra S."/>
            <person name="Crosby M.A."/>
            <person name="Mungall C.J."/>
            <person name="Matthews B.B."/>
            <person name="Campbell K.S."/>
            <person name="Hradecky P."/>
            <person name="Huang Y."/>
            <person name="Kaminker J.S."/>
            <person name="Millburn G.H."/>
            <person name="Prochnik S.E."/>
            <person name="Smith C.D."/>
            <person name="Tupy J.L."/>
            <person name="Whitfield E.J."/>
            <person name="Bayraktaroglu L."/>
            <person name="Berman B.P."/>
            <person name="Bettencourt B.R."/>
            <person name="Celniker S.E."/>
            <person name="de Grey A.D.N.J."/>
            <person name="Drysdale R.A."/>
            <person name="Harris N.L."/>
            <person name="Richter J."/>
            <person name="Russo S."/>
            <person name="Schroeder A.J."/>
            <person name="Shu S.Q."/>
            <person name="Stapleton M."/>
            <person name="Yamada C."/>
            <person name="Ashburner M."/>
            <person name="Gelbart W.M."/>
            <person name="Rubin G.M."/>
            <person name="Lewis S.E."/>
        </authorList>
    </citation>
    <scope>GENOME REANNOTATION</scope>
    <source>
        <strain>Berkeley</strain>
    </source>
</reference>
<reference key="3">
    <citation type="submission" date="2006-01" db="EMBL/GenBank/DDBJ databases">
        <authorList>
            <person name="Stapleton M."/>
            <person name="Carlson J."/>
            <person name="Chavez C."/>
            <person name="Frise E."/>
            <person name="George R."/>
            <person name="Pacleb J."/>
            <person name="Park S."/>
            <person name="Wan K."/>
            <person name="Yu C."/>
            <person name="Celniker S."/>
        </authorList>
    </citation>
    <scope>NUCLEOTIDE SEQUENCE [MRNA]</scope>
</reference>
<reference key="4">
    <citation type="journal article" date="2004" name="Curr. Biol.">
        <title>Identification of the gene encoding bursicon, an insect neuropeptide responsible for cuticle sclerotization and wing spreading.</title>
        <authorList>
            <person name="Dewey E.M."/>
            <person name="McNabb S.L."/>
            <person name="Ewer J."/>
            <person name="Kuo G.R."/>
            <person name="Takanishi C.L."/>
            <person name="Truman J.W."/>
            <person name="Honegger H.-W."/>
        </authorList>
    </citation>
    <scope>TISSUE SPECIFICITY</scope>
</reference>
<dbReference type="EMBL" id="AE014297">
    <property type="protein sequence ID" value="AAF56045.2"/>
    <property type="molecule type" value="Genomic_DNA"/>
</dbReference>
<dbReference type="EMBL" id="AE014297">
    <property type="protein sequence ID" value="AGB96226.1"/>
    <property type="molecule type" value="Genomic_DNA"/>
</dbReference>
<dbReference type="EMBL" id="BT024429">
    <property type="protein sequence ID" value="ABC86491.1"/>
    <property type="molecule type" value="mRNA"/>
</dbReference>
<dbReference type="RefSeq" id="NP_001262846.1">
    <property type="nucleotide sequence ID" value="NM_001275917.2"/>
</dbReference>
<dbReference type="RefSeq" id="NP_651083.2">
    <property type="nucleotide sequence ID" value="NM_142826.2"/>
</dbReference>
<dbReference type="PDB" id="1Y49">
    <property type="method" value="NMR"/>
    <property type="chains" value="A=52-60"/>
</dbReference>
<dbReference type="PDBsum" id="1Y49"/>
<dbReference type="SMR" id="Q9VCW0"/>
<dbReference type="BioGRID" id="67633">
    <property type="interactions" value="3"/>
</dbReference>
<dbReference type="FunCoup" id="Q9VCW0">
    <property type="interactions" value="107"/>
</dbReference>
<dbReference type="IntAct" id="Q9VCW0">
    <property type="interactions" value="2"/>
</dbReference>
<dbReference type="STRING" id="7227.FBpp0083726"/>
<dbReference type="PaxDb" id="7227-FBpp0083726"/>
<dbReference type="DNASU" id="42683"/>
<dbReference type="EnsemblMetazoa" id="FBtr0084333">
    <property type="protein sequence ID" value="FBpp0083726"/>
    <property type="gene ID" value="FBgn0039007"/>
</dbReference>
<dbReference type="EnsemblMetazoa" id="FBtr0335007">
    <property type="protein sequence ID" value="FBpp0307015"/>
    <property type="gene ID" value="FBgn0039007"/>
</dbReference>
<dbReference type="GeneID" id="42683"/>
<dbReference type="KEGG" id="dme:Dmel_CG4910"/>
<dbReference type="AGR" id="FB:FBgn0039007"/>
<dbReference type="CTD" id="42683"/>
<dbReference type="FlyBase" id="FBgn0039007">
    <property type="gene designation" value="CCAP"/>
</dbReference>
<dbReference type="VEuPathDB" id="VectorBase:FBgn0039007"/>
<dbReference type="eggNOG" id="ENOG502SB93">
    <property type="taxonomic scope" value="Eukaryota"/>
</dbReference>
<dbReference type="HOGENOM" id="CLU_1697355_0_0_1"/>
<dbReference type="InParanoid" id="Q9VCW0"/>
<dbReference type="OMA" id="DKPYNNE"/>
<dbReference type="OrthoDB" id="6134464at2759"/>
<dbReference type="PhylomeDB" id="Q9VCW0"/>
<dbReference type="SignaLink" id="Q9VCW0"/>
<dbReference type="BioGRID-ORCS" id="42683">
    <property type="hits" value="0 hits in 1 CRISPR screen"/>
</dbReference>
<dbReference type="EvolutionaryTrace" id="Q9VCW0"/>
<dbReference type="GenomeRNAi" id="42683"/>
<dbReference type="PRO" id="PR:Q9VCW0"/>
<dbReference type="Proteomes" id="UP000000803">
    <property type="component" value="Chromosome 3R"/>
</dbReference>
<dbReference type="Bgee" id="FBgn0039007">
    <property type="expression patterns" value="Expressed in adult posterior midgut class II enteroendocrine cell in adult midgut (Drosophila) and 18 other cell types or tissues"/>
</dbReference>
<dbReference type="ExpressionAtlas" id="Q9VCW0">
    <property type="expression patterns" value="baseline and differential"/>
</dbReference>
<dbReference type="GO" id="GO:0005615">
    <property type="term" value="C:extracellular space"/>
    <property type="evidence" value="ECO:0000314"/>
    <property type="project" value="FlyBase"/>
</dbReference>
<dbReference type="GO" id="GO:0005179">
    <property type="term" value="F:hormone activity"/>
    <property type="evidence" value="ECO:0007669"/>
    <property type="project" value="UniProtKB-KW"/>
</dbReference>
<dbReference type="GO" id="GO:0071855">
    <property type="term" value="F:neuropeptide receptor binding"/>
    <property type="evidence" value="ECO:0000353"/>
    <property type="project" value="FlyBase"/>
</dbReference>
<dbReference type="GO" id="GO:0007218">
    <property type="term" value="P:neuropeptide signaling pathway"/>
    <property type="evidence" value="ECO:0000314"/>
    <property type="project" value="FlyBase"/>
</dbReference>
<dbReference type="GO" id="GO:0010460">
    <property type="term" value="P:positive regulation of heart rate"/>
    <property type="evidence" value="ECO:0000314"/>
    <property type="project" value="FlyBase"/>
</dbReference>
<dbReference type="InterPro" id="IPR024276">
    <property type="entry name" value="CCAP"/>
</dbReference>
<dbReference type="Pfam" id="PF11105">
    <property type="entry name" value="CCAP"/>
    <property type="match status" value="1"/>
</dbReference>
<comment type="function">
    <text evidence="2">Cardioregulatory neurohormone that increases heart beat rate during adult wing inflation; has no effect on beat amplitude. The effect of CCAP is both ino- and chronotropic (By similarity).</text>
</comment>
<comment type="subcellular location">
    <subcellularLocation>
        <location evidence="2">Secreted</location>
    </subcellularLocation>
</comment>
<comment type="tissue specificity">
    <text evidence="6">Central nervous system; most neurons exhibit coexpression with Burs.</text>
</comment>
<feature type="signal peptide" evidence="3">
    <location>
        <begin position="1"/>
        <end position="23"/>
    </location>
</feature>
<feature type="propeptide" id="PRO_0000020851" evidence="2 3">
    <location>
        <begin position="24"/>
        <end position="49"/>
    </location>
</feature>
<feature type="peptide" id="PRO_0000020852" description="Cardioactive peptide" evidence="2">
    <location>
        <begin position="52"/>
        <end position="60"/>
    </location>
</feature>
<feature type="propeptide" id="PRO_0000020853" evidence="2">
    <location>
        <begin position="64"/>
        <end position="155"/>
    </location>
</feature>
<feature type="region of interest" description="Disordered" evidence="4">
    <location>
        <begin position="135"/>
        <end position="155"/>
    </location>
</feature>
<feature type="compositionally biased region" description="Basic and acidic residues" evidence="4">
    <location>
        <begin position="141"/>
        <end position="155"/>
    </location>
</feature>
<feature type="modified residue" description="Cysteine amide" evidence="1">
    <location>
        <position position="60"/>
    </location>
</feature>
<feature type="disulfide bond" evidence="2">
    <location>
        <begin position="54"/>
        <end position="60"/>
    </location>
</feature>
<feature type="strand" evidence="8">
    <location>
        <begin position="54"/>
        <end position="58"/>
    </location>
</feature>
<accession>Q9VCW0</accession>
<accession>Q29QG1</accession>
<organism>
    <name type="scientific">Drosophila melanogaster</name>
    <name type="common">Fruit fly</name>
    <dbReference type="NCBI Taxonomy" id="7227"/>
    <lineage>
        <taxon>Eukaryota</taxon>
        <taxon>Metazoa</taxon>
        <taxon>Ecdysozoa</taxon>
        <taxon>Arthropoda</taxon>
        <taxon>Hexapoda</taxon>
        <taxon>Insecta</taxon>
        <taxon>Pterygota</taxon>
        <taxon>Neoptera</taxon>
        <taxon>Endopterygota</taxon>
        <taxon>Diptera</taxon>
        <taxon>Brachycera</taxon>
        <taxon>Muscomorpha</taxon>
        <taxon>Ephydroidea</taxon>
        <taxon>Drosophilidae</taxon>
        <taxon>Drosophila</taxon>
        <taxon>Sophophora</taxon>
    </lineage>
</organism>